<comment type="function">
    <text evidence="1">Part of a sulfur-relay system required for 2-thiolation of 5-methylaminomethyl-2-thiouridine (mnm(5)s(2)U) at tRNA wobble positions. Could accept sulfur from TusD (By similarity).</text>
</comment>
<comment type="subunit">
    <text evidence="1">Interacts with the TusBCD complex. Interacts with MnmA (By similarity).</text>
</comment>
<comment type="subcellular location">
    <subcellularLocation>
        <location evidence="1">Cytoplasm</location>
    </subcellularLocation>
</comment>
<comment type="similarity">
    <text evidence="2">Belongs to the DsrC/TusE family.</text>
</comment>
<keyword id="KW-0963">Cytoplasm</keyword>
<keyword id="KW-1185">Reference proteome</keyword>
<keyword id="KW-0808">Transferase</keyword>
<keyword id="KW-0819">tRNA processing</keyword>
<proteinExistence type="inferred from homology"/>
<sequence>MNTDNKILYTYENLEKDSEGYLKKTKDWNIKLAEEIAKRENITLSSDHWKVIIFVRKFYFKFNITPSMRMLIKSIQKEIGKSKMNSIYLFKLFPKGPAKQASKIAGIPKPVKCL</sequence>
<name>TUSE_BUCAI</name>
<reference key="1">
    <citation type="journal article" date="2000" name="Nature">
        <title>Genome sequence of the endocellular bacterial symbiont of aphids Buchnera sp. APS.</title>
        <authorList>
            <person name="Shigenobu S."/>
            <person name="Watanabe H."/>
            <person name="Hattori M."/>
            <person name="Sakaki Y."/>
            <person name="Ishikawa H."/>
        </authorList>
    </citation>
    <scope>NUCLEOTIDE SEQUENCE [LARGE SCALE GENOMIC DNA]</scope>
    <source>
        <strain>APS</strain>
    </source>
</reference>
<protein>
    <recommendedName>
        <fullName>Sulfurtransferase TusE</fullName>
        <ecNumber>2.8.1.-</ecNumber>
    </recommendedName>
    <alternativeName>
        <fullName>tRNA 2-thiouridine synthesizing protein E</fullName>
    </alternativeName>
</protein>
<accession>P57539</accession>
<dbReference type="EC" id="2.8.1.-"/>
<dbReference type="EMBL" id="BA000003">
    <property type="protein sequence ID" value="BAB13164.1"/>
    <property type="molecule type" value="Genomic_DNA"/>
</dbReference>
<dbReference type="RefSeq" id="NP_240278.1">
    <property type="nucleotide sequence ID" value="NC_002528.1"/>
</dbReference>
<dbReference type="RefSeq" id="WP_009874419.1">
    <property type="nucleotide sequence ID" value="NZ_AP036055.1"/>
</dbReference>
<dbReference type="SMR" id="P57539"/>
<dbReference type="STRING" id="563178.BUAP5A_460"/>
<dbReference type="EnsemblBacteria" id="BAB13164">
    <property type="protein sequence ID" value="BAB13164"/>
    <property type="gene ID" value="BAB13164"/>
</dbReference>
<dbReference type="KEGG" id="buc:BU467"/>
<dbReference type="PATRIC" id="fig|107806.10.peg.476"/>
<dbReference type="eggNOG" id="COG2920">
    <property type="taxonomic scope" value="Bacteria"/>
</dbReference>
<dbReference type="HOGENOM" id="CLU_153199_0_0_6"/>
<dbReference type="Proteomes" id="UP000001806">
    <property type="component" value="Chromosome"/>
</dbReference>
<dbReference type="GO" id="GO:0005737">
    <property type="term" value="C:cytoplasm"/>
    <property type="evidence" value="ECO:0007669"/>
    <property type="project" value="UniProtKB-SubCell"/>
</dbReference>
<dbReference type="GO" id="GO:0097163">
    <property type="term" value="F:sulfur carrier activity"/>
    <property type="evidence" value="ECO:0007669"/>
    <property type="project" value="TreeGrafter"/>
</dbReference>
<dbReference type="GO" id="GO:0016740">
    <property type="term" value="F:transferase activity"/>
    <property type="evidence" value="ECO:0007669"/>
    <property type="project" value="UniProtKB-KW"/>
</dbReference>
<dbReference type="GO" id="GO:0002143">
    <property type="term" value="P:tRNA wobble position uridine thiolation"/>
    <property type="evidence" value="ECO:0007669"/>
    <property type="project" value="TreeGrafter"/>
</dbReference>
<dbReference type="Gene3D" id="3.30.1420.10">
    <property type="match status" value="1"/>
</dbReference>
<dbReference type="Gene3D" id="1.10.10.370">
    <property type="entry name" value="DsrC-like protein, C-terminal domain"/>
    <property type="match status" value="1"/>
</dbReference>
<dbReference type="InterPro" id="IPR042072">
    <property type="entry name" value="DsrC-like_C"/>
</dbReference>
<dbReference type="InterPro" id="IPR025526">
    <property type="entry name" value="DsrC-like_dom_sf"/>
</dbReference>
<dbReference type="InterPro" id="IPR043163">
    <property type="entry name" value="DsrC-like_N"/>
</dbReference>
<dbReference type="InterPro" id="IPR007453">
    <property type="entry name" value="DsrC/TusE"/>
</dbReference>
<dbReference type="NCBIfam" id="TIGR03342">
    <property type="entry name" value="dsrC_tusE_dsvC"/>
    <property type="match status" value="1"/>
</dbReference>
<dbReference type="PANTHER" id="PTHR37010">
    <property type="entry name" value="SULFURTRANSFERASE TUSE"/>
    <property type="match status" value="1"/>
</dbReference>
<dbReference type="PANTHER" id="PTHR37010:SF1">
    <property type="entry name" value="SULFURTRANSFERASE TUSE"/>
    <property type="match status" value="1"/>
</dbReference>
<dbReference type="Pfam" id="PF04358">
    <property type="entry name" value="DsrC"/>
    <property type="match status" value="1"/>
</dbReference>
<dbReference type="PIRSF" id="PIRSF006223">
    <property type="entry name" value="DsrC_TusE"/>
    <property type="match status" value="1"/>
</dbReference>
<dbReference type="SUPFAM" id="SSF69721">
    <property type="entry name" value="DsrC, the gamma subunit of dissimilatory sulfite reductase"/>
    <property type="match status" value="1"/>
</dbReference>
<feature type="chain" id="PRO_0000216256" description="Sulfurtransferase TusE">
    <location>
        <begin position="1"/>
        <end position="114"/>
    </location>
</feature>
<feature type="active site" description="Cysteine persulfide intermediate" evidence="1">
    <location>
        <position position="113"/>
    </location>
</feature>
<organism>
    <name type="scientific">Buchnera aphidicola subsp. Acyrthosiphon pisum (strain APS)</name>
    <name type="common">Acyrthosiphon pisum symbiotic bacterium</name>
    <dbReference type="NCBI Taxonomy" id="107806"/>
    <lineage>
        <taxon>Bacteria</taxon>
        <taxon>Pseudomonadati</taxon>
        <taxon>Pseudomonadota</taxon>
        <taxon>Gammaproteobacteria</taxon>
        <taxon>Enterobacterales</taxon>
        <taxon>Erwiniaceae</taxon>
        <taxon>Buchnera</taxon>
    </lineage>
</organism>
<evidence type="ECO:0000250" key="1"/>
<evidence type="ECO:0000305" key="2"/>
<gene>
    <name type="primary">tusE</name>
    <name type="ordered locus">BU467</name>
</gene>